<name>OR2W1_HUMAN</name>
<accession>Q9Y3N9</accession>
<accession>B0S7Y5</accession>
<accession>Q5JNZ1</accession>
<accession>Q6IEU0</accession>
<accession>Q96R17</accession>
<accession>Q9GZL0</accession>
<accession>Q9GZL1</accession>
<sequence length="320" mass="36101">MDQSNYSSLHGFILLGFSNHPKMEMILSGVVAIFYLITLVGNTAIILASLLDSQLHTPMYFFLRNLSFLDLCFTTSIIPQMLVNLWGPDKTISYVGCIIQLYVYMWLGSVECLLLAVMSYDRFTAICKPLHYFVVMNPHLCLKMIIMIWSISLANSVVLCTLTLNLPTCGNNILDHFLCELPALVKIACVDTTTVEMSVFALGIIIVLTPLILILISYGYIAKAVLRTKSKASQRKAMNTCGSHLTVVSMFYGTIIYMYLQPGNRASKDQGKFLTLFYTVITPSLNPLIYTLRNKDMKDALKKLMRFHHKSTKIKRNCKS</sequence>
<evidence type="ECO:0000255" key="1"/>
<evidence type="ECO:0000255" key="2">
    <source>
        <dbReference type="PROSITE-ProRule" id="PRU00521"/>
    </source>
</evidence>
<evidence type="ECO:0000269" key="3">
    <source ref="1"/>
</evidence>
<evidence type="ECO:0000305" key="4"/>
<dbReference type="EMBL" id="AJ302594">
    <property type="protein sequence ID" value="CAC20514.1"/>
    <property type="molecule type" value="Genomic_DNA"/>
</dbReference>
<dbReference type="EMBL" id="AJ302595">
    <property type="protein sequence ID" value="CAC20515.1"/>
    <property type="molecule type" value="Genomic_DNA"/>
</dbReference>
<dbReference type="EMBL" id="AJ302596">
    <property type="protein sequence ID" value="CAC20516.1"/>
    <property type="molecule type" value="Genomic_DNA"/>
</dbReference>
<dbReference type="EMBL" id="AJ302597">
    <property type="protein sequence ID" value="CAC20517.1"/>
    <property type="molecule type" value="Genomic_DNA"/>
</dbReference>
<dbReference type="EMBL" id="AJ302598">
    <property type="protein sequence ID" value="CAC20518.1"/>
    <property type="molecule type" value="Genomic_DNA"/>
</dbReference>
<dbReference type="EMBL" id="AJ302599">
    <property type="protein sequence ID" value="CAC20519.1"/>
    <property type="molecule type" value="Genomic_DNA"/>
</dbReference>
<dbReference type="EMBL" id="AJ302600">
    <property type="protein sequence ID" value="CAC20520.1"/>
    <property type="molecule type" value="Genomic_DNA"/>
</dbReference>
<dbReference type="EMBL" id="AJ302601">
    <property type="protein sequence ID" value="CAC20521.1"/>
    <property type="molecule type" value="Genomic_DNA"/>
</dbReference>
<dbReference type="EMBL" id="AJ302602">
    <property type="protein sequence ID" value="CAC20522.1"/>
    <property type="molecule type" value="Genomic_DNA"/>
</dbReference>
<dbReference type="EMBL" id="AJ302603">
    <property type="protein sequence ID" value="CAC20523.1"/>
    <property type="molecule type" value="Genomic_DNA"/>
</dbReference>
<dbReference type="EMBL" id="AL035402">
    <property type="protein sequence ID" value="CAB42853.1"/>
    <property type="molecule type" value="Genomic_DNA"/>
</dbReference>
<dbReference type="EMBL" id="AL662791">
    <property type="status" value="NOT_ANNOTATED_CDS"/>
    <property type="molecule type" value="Genomic_DNA"/>
</dbReference>
<dbReference type="EMBL" id="AL662865">
    <property type="status" value="NOT_ANNOTATED_CDS"/>
    <property type="molecule type" value="Genomic_DNA"/>
</dbReference>
<dbReference type="EMBL" id="AL929561">
    <property type="status" value="NOT_ANNOTATED_CDS"/>
    <property type="molecule type" value="Genomic_DNA"/>
</dbReference>
<dbReference type="EMBL" id="BX248413">
    <property type="status" value="NOT_ANNOTATED_CDS"/>
    <property type="molecule type" value="Genomic_DNA"/>
</dbReference>
<dbReference type="EMBL" id="CR759957">
    <property type="status" value="NOT_ANNOTATED_CDS"/>
    <property type="molecule type" value="Genomic_DNA"/>
</dbReference>
<dbReference type="EMBL" id="BX927167">
    <property type="status" value="NOT_ANNOTATED_CDS"/>
    <property type="molecule type" value="Genomic_DNA"/>
</dbReference>
<dbReference type="EMBL" id="CR936923">
    <property type="status" value="NOT_ANNOTATED_CDS"/>
    <property type="molecule type" value="Genomic_DNA"/>
</dbReference>
<dbReference type="EMBL" id="CR759835">
    <property type="status" value="NOT_ANNOTATED_CDS"/>
    <property type="molecule type" value="Genomic_DNA"/>
</dbReference>
<dbReference type="EMBL" id="CH471081">
    <property type="protein sequence ID" value="EAX03181.1"/>
    <property type="molecule type" value="Genomic_DNA"/>
</dbReference>
<dbReference type="EMBL" id="BC103870">
    <property type="protein sequence ID" value="AAI03871.1"/>
    <property type="molecule type" value="mRNA"/>
</dbReference>
<dbReference type="EMBL" id="BC103871">
    <property type="protein sequence ID" value="AAI03872.1"/>
    <property type="molecule type" value="mRNA"/>
</dbReference>
<dbReference type="EMBL" id="BC103872">
    <property type="protein sequence ID" value="AAI03873.1"/>
    <property type="molecule type" value="mRNA"/>
</dbReference>
<dbReference type="EMBL" id="AF399628">
    <property type="protein sequence ID" value="AAK95113.1"/>
    <property type="molecule type" value="Genomic_DNA"/>
</dbReference>
<dbReference type="EMBL" id="BK004522">
    <property type="protein sequence ID" value="DAA04920.1"/>
    <property type="molecule type" value="Genomic_DNA"/>
</dbReference>
<dbReference type="CCDS" id="CCDS4656.1"/>
<dbReference type="RefSeq" id="NP_112165.1">
    <property type="nucleotide sequence ID" value="NM_030903.3"/>
</dbReference>
<dbReference type="SMR" id="Q9Y3N9"/>
<dbReference type="BioGRID" id="117792">
    <property type="interactions" value="1"/>
</dbReference>
<dbReference type="FunCoup" id="Q9Y3N9">
    <property type="interactions" value="459"/>
</dbReference>
<dbReference type="STRING" id="9606.ENSP00000366380"/>
<dbReference type="GlyCosmos" id="Q9Y3N9">
    <property type="glycosylation" value="3 sites, 1 glycan"/>
</dbReference>
<dbReference type="GlyGen" id="Q9Y3N9">
    <property type="glycosylation" value="3 sites, 1 O-linked glycan (2 sites)"/>
</dbReference>
<dbReference type="iPTMnet" id="Q9Y3N9"/>
<dbReference type="PhosphoSitePlus" id="Q9Y3N9"/>
<dbReference type="BioMuta" id="OR2W1"/>
<dbReference type="DMDM" id="14423828"/>
<dbReference type="PaxDb" id="9606-ENSP00000366380"/>
<dbReference type="PeptideAtlas" id="Q9Y3N9"/>
<dbReference type="Antibodypedia" id="25938">
    <property type="antibodies" value="91 antibodies from 19 providers"/>
</dbReference>
<dbReference type="DNASU" id="26692"/>
<dbReference type="Ensembl" id="ENST00000377175.2">
    <property type="protein sequence ID" value="ENSP00000366380.1"/>
    <property type="gene ID" value="ENSG00000204704.3"/>
</dbReference>
<dbReference type="Ensembl" id="ENST00000383654.2">
    <property type="protein sequence ID" value="ENSP00000373150.2"/>
    <property type="gene ID" value="ENSG00000206525.2"/>
</dbReference>
<dbReference type="Ensembl" id="ENST00000411447.1">
    <property type="protein sequence ID" value="ENSP00000388144.1"/>
    <property type="gene ID" value="ENSG00000227639.1"/>
</dbReference>
<dbReference type="Ensembl" id="ENST00000420540.1">
    <property type="protein sequence ID" value="ENSP00000392635.1"/>
    <property type="gene ID" value="ENSG00000228977.1"/>
</dbReference>
<dbReference type="Ensembl" id="ENST00000421027.1">
    <property type="protein sequence ID" value="ENSP00000412537.1"/>
    <property type="gene ID" value="ENSG00000226463.1"/>
</dbReference>
<dbReference type="Ensembl" id="ENST00000421766.1">
    <property type="protein sequence ID" value="ENSP00000389825.1"/>
    <property type="gene ID" value="ENSG00000234101.1"/>
</dbReference>
<dbReference type="Ensembl" id="ENST00000439723.1">
    <property type="protein sequence ID" value="ENSP00000401866.1"/>
    <property type="gene ID" value="ENSG00000228652.1"/>
</dbReference>
<dbReference type="Ensembl" id="ENST00000446776.1">
    <property type="protein sequence ID" value="ENSP00000405025.1"/>
    <property type="gene ID" value="ENSG00000229328.1"/>
</dbReference>
<dbReference type="GeneID" id="26692"/>
<dbReference type="KEGG" id="hsa:26692"/>
<dbReference type="MANE-Select" id="ENST00000377175.2">
    <property type="protein sequence ID" value="ENSP00000366380.1"/>
    <property type="RefSeq nucleotide sequence ID" value="NM_030903.3"/>
    <property type="RefSeq protein sequence ID" value="NP_112165.1"/>
</dbReference>
<dbReference type="UCSC" id="uc003nlw.3">
    <property type="organism name" value="human"/>
</dbReference>
<dbReference type="AGR" id="HGNC:8281"/>
<dbReference type="CTD" id="26692"/>
<dbReference type="GeneCards" id="OR2W1"/>
<dbReference type="HGNC" id="HGNC:8281">
    <property type="gene designation" value="OR2W1"/>
</dbReference>
<dbReference type="HPA" id="ENSG00000204704">
    <property type="expression patterns" value="Not detected"/>
</dbReference>
<dbReference type="neXtProt" id="NX_Q9Y3N9"/>
<dbReference type="PharmGKB" id="PA32214"/>
<dbReference type="VEuPathDB" id="HostDB:ENSG00000204704"/>
<dbReference type="eggNOG" id="ENOG502T8AH">
    <property type="taxonomic scope" value="Eukaryota"/>
</dbReference>
<dbReference type="GeneTree" id="ENSGT01130000278266"/>
<dbReference type="HOGENOM" id="CLU_012526_1_0_1"/>
<dbReference type="InParanoid" id="Q9Y3N9"/>
<dbReference type="OMA" id="SQRKAMN"/>
<dbReference type="OrthoDB" id="9441733at2759"/>
<dbReference type="PAN-GO" id="Q9Y3N9">
    <property type="GO annotations" value="0 GO annotations based on evolutionary models"/>
</dbReference>
<dbReference type="PhylomeDB" id="Q9Y3N9"/>
<dbReference type="TreeFam" id="TF336512"/>
<dbReference type="PathwayCommons" id="Q9Y3N9"/>
<dbReference type="Reactome" id="R-HSA-381753">
    <property type="pathway name" value="Olfactory Signaling Pathway"/>
</dbReference>
<dbReference type="Reactome" id="R-HSA-9752946">
    <property type="pathway name" value="Expression and translocation of olfactory receptors"/>
</dbReference>
<dbReference type="SignaLink" id="Q9Y3N9"/>
<dbReference type="BioGRID-ORCS" id="26692">
    <property type="hits" value="8 hits in 721 CRISPR screens"/>
</dbReference>
<dbReference type="GeneWiki" id="OR2W1"/>
<dbReference type="GenomeRNAi" id="26692"/>
<dbReference type="Pharos" id="Q9Y3N9">
    <property type="development level" value="Tdark"/>
</dbReference>
<dbReference type="PRO" id="PR:Q9Y3N9"/>
<dbReference type="Proteomes" id="UP000005640">
    <property type="component" value="Chromosome 6"/>
</dbReference>
<dbReference type="RNAct" id="Q9Y3N9">
    <property type="molecule type" value="protein"/>
</dbReference>
<dbReference type="Bgee" id="ENSG00000204704">
    <property type="expression patterns" value="Expressed in male germ line stem cell (sensu Vertebrata) in testis and 2 other cell types or tissues"/>
</dbReference>
<dbReference type="ExpressionAtlas" id="Q9Y3N9">
    <property type="expression patterns" value="baseline and differential"/>
</dbReference>
<dbReference type="GO" id="GO:0005886">
    <property type="term" value="C:plasma membrane"/>
    <property type="evidence" value="ECO:0000318"/>
    <property type="project" value="GO_Central"/>
</dbReference>
<dbReference type="GO" id="GO:0004930">
    <property type="term" value="F:G protein-coupled receptor activity"/>
    <property type="evidence" value="ECO:0007669"/>
    <property type="project" value="UniProtKB-KW"/>
</dbReference>
<dbReference type="GO" id="GO:0004984">
    <property type="term" value="F:olfactory receptor activity"/>
    <property type="evidence" value="ECO:0000318"/>
    <property type="project" value="GO_Central"/>
</dbReference>
<dbReference type="GO" id="GO:0050911">
    <property type="term" value="P:detection of chemical stimulus involved in sensory perception of smell"/>
    <property type="evidence" value="ECO:0000318"/>
    <property type="project" value="GO_Central"/>
</dbReference>
<dbReference type="CDD" id="cd15434">
    <property type="entry name" value="7tmA_OR2W-like"/>
    <property type="match status" value="1"/>
</dbReference>
<dbReference type="FunFam" id="1.10.1220.70:FF:000001">
    <property type="entry name" value="Olfactory receptor"/>
    <property type="match status" value="1"/>
</dbReference>
<dbReference type="FunFam" id="1.20.1070.10:FF:000005">
    <property type="entry name" value="Olfactory receptor"/>
    <property type="match status" value="1"/>
</dbReference>
<dbReference type="Gene3D" id="1.20.1070.10">
    <property type="entry name" value="Rhodopsin 7-helix transmembrane proteins"/>
    <property type="match status" value="1"/>
</dbReference>
<dbReference type="InterPro" id="IPR000276">
    <property type="entry name" value="GPCR_Rhodpsn"/>
</dbReference>
<dbReference type="InterPro" id="IPR017452">
    <property type="entry name" value="GPCR_Rhodpsn_7TM"/>
</dbReference>
<dbReference type="InterPro" id="IPR000725">
    <property type="entry name" value="Olfact_rcpt"/>
</dbReference>
<dbReference type="PANTHER" id="PTHR26453">
    <property type="entry name" value="OLFACTORY RECEPTOR"/>
    <property type="match status" value="1"/>
</dbReference>
<dbReference type="Pfam" id="PF13853">
    <property type="entry name" value="7tm_4"/>
    <property type="match status" value="1"/>
</dbReference>
<dbReference type="PRINTS" id="PR00237">
    <property type="entry name" value="GPCRRHODOPSN"/>
</dbReference>
<dbReference type="PRINTS" id="PR00245">
    <property type="entry name" value="OLFACTORYR"/>
</dbReference>
<dbReference type="SUPFAM" id="SSF81321">
    <property type="entry name" value="Family A G protein-coupled receptor-like"/>
    <property type="match status" value="1"/>
</dbReference>
<dbReference type="PROSITE" id="PS00237">
    <property type="entry name" value="G_PROTEIN_RECEP_F1_1"/>
    <property type="match status" value="1"/>
</dbReference>
<dbReference type="PROSITE" id="PS50262">
    <property type="entry name" value="G_PROTEIN_RECEP_F1_2"/>
    <property type="match status" value="1"/>
</dbReference>
<organism>
    <name type="scientific">Homo sapiens</name>
    <name type="common">Human</name>
    <dbReference type="NCBI Taxonomy" id="9606"/>
    <lineage>
        <taxon>Eukaryota</taxon>
        <taxon>Metazoa</taxon>
        <taxon>Chordata</taxon>
        <taxon>Craniata</taxon>
        <taxon>Vertebrata</taxon>
        <taxon>Euteleostomi</taxon>
        <taxon>Mammalia</taxon>
        <taxon>Eutheria</taxon>
        <taxon>Euarchontoglires</taxon>
        <taxon>Primates</taxon>
        <taxon>Haplorrhini</taxon>
        <taxon>Catarrhini</taxon>
        <taxon>Hominidae</taxon>
        <taxon>Homo</taxon>
    </lineage>
</organism>
<keyword id="KW-1003">Cell membrane</keyword>
<keyword id="KW-1015">Disulfide bond</keyword>
<keyword id="KW-0297">G-protein coupled receptor</keyword>
<keyword id="KW-0325">Glycoprotein</keyword>
<keyword id="KW-0472">Membrane</keyword>
<keyword id="KW-0552">Olfaction</keyword>
<keyword id="KW-0675">Receptor</keyword>
<keyword id="KW-1185">Reference proteome</keyword>
<keyword id="KW-0716">Sensory transduction</keyword>
<keyword id="KW-0807">Transducer</keyword>
<keyword id="KW-0812">Transmembrane</keyword>
<keyword id="KW-1133">Transmembrane helix</keyword>
<reference key="1">
    <citation type="book" date="2000" name="Major histocompatibility complex-evolution, structure, and function">
        <title>Polymorphic olfactory receptor genes and HLA loci constitute extended haplotypes.</title>
        <editorList>
            <person name="Kasahara M."/>
        </editorList>
        <authorList>
            <person name="Ziegler A."/>
            <person name="Ehlers A."/>
            <person name="Forbes S.A."/>
            <person name="Trowsdale J."/>
            <person name="Uchanska-Ziegler B."/>
            <person name="Volz A."/>
            <person name="Younger R."/>
            <person name="Beck S."/>
        </authorList>
    </citation>
    <scope>NUCLEOTIDE SEQUENCE [GENOMIC DNA]</scope>
    <scope>VARIANTS VAL-81 AND ASN-296</scope>
</reference>
<reference key="2">
    <citation type="journal article" date="2003" name="Nature">
        <title>The DNA sequence and analysis of human chromosome 6.</title>
        <authorList>
            <person name="Mungall A.J."/>
            <person name="Palmer S.A."/>
            <person name="Sims S.K."/>
            <person name="Edwards C.A."/>
            <person name="Ashurst J.L."/>
            <person name="Wilming L."/>
            <person name="Jones M.C."/>
            <person name="Horton R."/>
            <person name="Hunt S.E."/>
            <person name="Scott C.E."/>
            <person name="Gilbert J.G.R."/>
            <person name="Clamp M.E."/>
            <person name="Bethel G."/>
            <person name="Milne S."/>
            <person name="Ainscough R."/>
            <person name="Almeida J.P."/>
            <person name="Ambrose K.D."/>
            <person name="Andrews T.D."/>
            <person name="Ashwell R.I.S."/>
            <person name="Babbage A.K."/>
            <person name="Bagguley C.L."/>
            <person name="Bailey J."/>
            <person name="Banerjee R."/>
            <person name="Barker D.J."/>
            <person name="Barlow K.F."/>
            <person name="Bates K."/>
            <person name="Beare D.M."/>
            <person name="Beasley H."/>
            <person name="Beasley O."/>
            <person name="Bird C.P."/>
            <person name="Blakey S.E."/>
            <person name="Bray-Allen S."/>
            <person name="Brook J."/>
            <person name="Brown A.J."/>
            <person name="Brown J.Y."/>
            <person name="Burford D.C."/>
            <person name="Burrill W."/>
            <person name="Burton J."/>
            <person name="Carder C."/>
            <person name="Carter N.P."/>
            <person name="Chapman J.C."/>
            <person name="Clark S.Y."/>
            <person name="Clark G."/>
            <person name="Clee C.M."/>
            <person name="Clegg S."/>
            <person name="Cobley V."/>
            <person name="Collier R.E."/>
            <person name="Collins J.E."/>
            <person name="Colman L.K."/>
            <person name="Corby N.R."/>
            <person name="Coville G.J."/>
            <person name="Culley K.M."/>
            <person name="Dhami P."/>
            <person name="Davies J."/>
            <person name="Dunn M."/>
            <person name="Earthrowl M.E."/>
            <person name="Ellington A.E."/>
            <person name="Evans K.A."/>
            <person name="Faulkner L."/>
            <person name="Francis M.D."/>
            <person name="Frankish A."/>
            <person name="Frankland J."/>
            <person name="French L."/>
            <person name="Garner P."/>
            <person name="Garnett J."/>
            <person name="Ghori M.J."/>
            <person name="Gilby L.M."/>
            <person name="Gillson C.J."/>
            <person name="Glithero R.J."/>
            <person name="Grafham D.V."/>
            <person name="Grant M."/>
            <person name="Gribble S."/>
            <person name="Griffiths C."/>
            <person name="Griffiths M.N.D."/>
            <person name="Hall R."/>
            <person name="Halls K.S."/>
            <person name="Hammond S."/>
            <person name="Harley J.L."/>
            <person name="Hart E.A."/>
            <person name="Heath P.D."/>
            <person name="Heathcott R."/>
            <person name="Holmes S.J."/>
            <person name="Howden P.J."/>
            <person name="Howe K.L."/>
            <person name="Howell G.R."/>
            <person name="Huckle E."/>
            <person name="Humphray S.J."/>
            <person name="Humphries M.D."/>
            <person name="Hunt A.R."/>
            <person name="Johnson C.M."/>
            <person name="Joy A.A."/>
            <person name="Kay M."/>
            <person name="Keenan S.J."/>
            <person name="Kimberley A.M."/>
            <person name="King A."/>
            <person name="Laird G.K."/>
            <person name="Langford C."/>
            <person name="Lawlor S."/>
            <person name="Leongamornlert D.A."/>
            <person name="Leversha M."/>
            <person name="Lloyd C.R."/>
            <person name="Lloyd D.M."/>
            <person name="Loveland J.E."/>
            <person name="Lovell J."/>
            <person name="Martin S."/>
            <person name="Mashreghi-Mohammadi M."/>
            <person name="Maslen G.L."/>
            <person name="Matthews L."/>
            <person name="McCann O.T."/>
            <person name="McLaren S.J."/>
            <person name="McLay K."/>
            <person name="McMurray A."/>
            <person name="Moore M.J.F."/>
            <person name="Mullikin J.C."/>
            <person name="Niblett D."/>
            <person name="Nickerson T."/>
            <person name="Novik K.L."/>
            <person name="Oliver K."/>
            <person name="Overton-Larty E.K."/>
            <person name="Parker A."/>
            <person name="Patel R."/>
            <person name="Pearce A.V."/>
            <person name="Peck A.I."/>
            <person name="Phillimore B.J.C.T."/>
            <person name="Phillips S."/>
            <person name="Plumb R.W."/>
            <person name="Porter K.M."/>
            <person name="Ramsey Y."/>
            <person name="Ranby S.A."/>
            <person name="Rice C.M."/>
            <person name="Ross M.T."/>
            <person name="Searle S.M."/>
            <person name="Sehra H.K."/>
            <person name="Sheridan E."/>
            <person name="Skuce C.D."/>
            <person name="Smith S."/>
            <person name="Smith M."/>
            <person name="Spraggon L."/>
            <person name="Squares S.L."/>
            <person name="Steward C.A."/>
            <person name="Sycamore N."/>
            <person name="Tamlyn-Hall G."/>
            <person name="Tester J."/>
            <person name="Theaker A.J."/>
            <person name="Thomas D.W."/>
            <person name="Thorpe A."/>
            <person name="Tracey A."/>
            <person name="Tromans A."/>
            <person name="Tubby B."/>
            <person name="Wall M."/>
            <person name="Wallis J.M."/>
            <person name="West A.P."/>
            <person name="White S.S."/>
            <person name="Whitehead S.L."/>
            <person name="Whittaker H."/>
            <person name="Wild A."/>
            <person name="Willey D.J."/>
            <person name="Wilmer T.E."/>
            <person name="Wood J.M."/>
            <person name="Wray P.W."/>
            <person name="Wyatt J.C."/>
            <person name="Young L."/>
            <person name="Younger R.M."/>
            <person name="Bentley D.R."/>
            <person name="Coulson A."/>
            <person name="Durbin R.M."/>
            <person name="Hubbard T."/>
            <person name="Sulston J.E."/>
            <person name="Dunham I."/>
            <person name="Rogers J."/>
            <person name="Beck S."/>
        </authorList>
    </citation>
    <scope>NUCLEOTIDE SEQUENCE [LARGE SCALE GENOMIC DNA]</scope>
</reference>
<reference key="3">
    <citation type="submission" date="2005-07" db="EMBL/GenBank/DDBJ databases">
        <authorList>
            <person name="Mural R.J."/>
            <person name="Istrail S."/>
            <person name="Sutton G.G."/>
            <person name="Florea L."/>
            <person name="Halpern A.L."/>
            <person name="Mobarry C.M."/>
            <person name="Lippert R."/>
            <person name="Walenz B."/>
            <person name="Shatkay H."/>
            <person name="Dew I."/>
            <person name="Miller J.R."/>
            <person name="Flanigan M.J."/>
            <person name="Edwards N.J."/>
            <person name="Bolanos R."/>
            <person name="Fasulo D."/>
            <person name="Halldorsson B.V."/>
            <person name="Hannenhalli S."/>
            <person name="Turner R."/>
            <person name="Yooseph S."/>
            <person name="Lu F."/>
            <person name="Nusskern D.R."/>
            <person name="Shue B.C."/>
            <person name="Zheng X.H."/>
            <person name="Zhong F."/>
            <person name="Delcher A.L."/>
            <person name="Huson D.H."/>
            <person name="Kravitz S.A."/>
            <person name="Mouchard L."/>
            <person name="Reinert K."/>
            <person name="Remington K.A."/>
            <person name="Clark A.G."/>
            <person name="Waterman M.S."/>
            <person name="Eichler E.E."/>
            <person name="Adams M.D."/>
            <person name="Hunkapiller M.W."/>
            <person name="Myers E.W."/>
            <person name="Venter J.C."/>
        </authorList>
    </citation>
    <scope>NUCLEOTIDE SEQUENCE [LARGE SCALE GENOMIC DNA]</scope>
</reference>
<reference key="4">
    <citation type="journal article" date="2004" name="Genome Res.">
        <title>The status, quality, and expansion of the NIH full-length cDNA project: the Mammalian Gene Collection (MGC).</title>
        <authorList>
            <consortium name="The MGC Project Team"/>
        </authorList>
    </citation>
    <scope>NUCLEOTIDE SEQUENCE [LARGE SCALE MRNA]</scope>
</reference>
<reference key="5">
    <citation type="journal article" date="2002" name="Genomics">
        <title>DEFOG: a practical scheme for deciphering families of genes.</title>
        <authorList>
            <person name="Fuchs T."/>
            <person name="Malecova B."/>
            <person name="Linhart C."/>
            <person name="Sharan R."/>
            <person name="Khen M."/>
            <person name="Herwig R."/>
            <person name="Shmulevich D."/>
            <person name="Elkon R."/>
            <person name="Steinfath M."/>
            <person name="O'Brien J.K."/>
            <person name="Radelof U."/>
            <person name="Lehrach H."/>
            <person name="Lancet D."/>
            <person name="Shamir R."/>
        </authorList>
    </citation>
    <scope>NUCLEOTIDE SEQUENCE [GENOMIC DNA] OF 68-283</scope>
</reference>
<reference key="6">
    <citation type="journal article" date="2004" name="Proc. Natl. Acad. Sci. U.S.A.">
        <title>The human olfactory receptor gene family.</title>
        <authorList>
            <person name="Malnic B."/>
            <person name="Godfrey P.A."/>
            <person name="Buck L.B."/>
        </authorList>
    </citation>
    <scope>IDENTIFICATION</scope>
</reference>
<reference key="7">
    <citation type="journal article" date="2004" name="Proc. Natl. Acad. Sci. U.S.A.">
        <authorList>
            <person name="Malnic B."/>
            <person name="Godfrey P.A."/>
            <person name="Buck L.B."/>
        </authorList>
    </citation>
    <scope>ERRATUM OF PUBMED:14983052</scope>
</reference>
<proteinExistence type="evidence at transcript level"/>
<comment type="function">
    <text evidence="4">Odorant receptor.</text>
</comment>
<comment type="subcellular location">
    <subcellularLocation>
        <location>Cell membrane</location>
        <topology>Multi-pass membrane protein</topology>
    </subcellularLocation>
</comment>
<comment type="similarity">
    <text evidence="2">Belongs to the G-protein coupled receptor 1 family.</text>
</comment>
<comment type="online information" name="Human Olfactory Receptor Data Exploratorium (HORDE)">
    <link uri="http://genome.weizmann.ac.il/horde/card/index/symbol:OR2W1"/>
</comment>
<protein>
    <recommendedName>
        <fullName>Olfactory receptor 2W1</fullName>
    </recommendedName>
    <alternativeName>
        <fullName>Hs6M1-15</fullName>
    </alternativeName>
    <alternativeName>
        <fullName>Olfactory receptor OR6-13</fullName>
    </alternativeName>
</protein>
<gene>
    <name type="primary">OR2W1</name>
</gene>
<feature type="chain" id="PRO_0000150511" description="Olfactory receptor 2W1">
    <location>
        <begin position="1"/>
        <end position="320"/>
    </location>
</feature>
<feature type="topological domain" description="Extracellular" evidence="1">
    <location>
        <begin position="1"/>
        <end position="25"/>
    </location>
</feature>
<feature type="transmembrane region" description="Helical; Name=1" evidence="1">
    <location>
        <begin position="26"/>
        <end position="49"/>
    </location>
</feature>
<feature type="topological domain" description="Cytoplasmic" evidence="1">
    <location>
        <begin position="50"/>
        <end position="57"/>
    </location>
</feature>
<feature type="transmembrane region" description="Helical; Name=2" evidence="1">
    <location>
        <begin position="58"/>
        <end position="79"/>
    </location>
</feature>
<feature type="topological domain" description="Extracellular" evidence="1">
    <location>
        <begin position="80"/>
        <end position="100"/>
    </location>
</feature>
<feature type="transmembrane region" description="Helical; Name=3" evidence="1">
    <location>
        <begin position="101"/>
        <end position="120"/>
    </location>
</feature>
<feature type="topological domain" description="Cytoplasmic" evidence="1">
    <location>
        <begin position="121"/>
        <end position="139"/>
    </location>
</feature>
<feature type="transmembrane region" description="Helical; Name=4" evidence="1">
    <location>
        <begin position="140"/>
        <end position="158"/>
    </location>
</feature>
<feature type="topological domain" description="Extracellular" evidence="1">
    <location>
        <begin position="159"/>
        <end position="195"/>
    </location>
</feature>
<feature type="transmembrane region" description="Helical; Name=5" evidence="1">
    <location>
        <begin position="196"/>
        <end position="219"/>
    </location>
</feature>
<feature type="topological domain" description="Cytoplasmic" evidence="1">
    <location>
        <begin position="220"/>
        <end position="236"/>
    </location>
</feature>
<feature type="transmembrane region" description="Helical; Name=6" evidence="1">
    <location>
        <begin position="237"/>
        <end position="259"/>
    </location>
</feature>
<feature type="topological domain" description="Extracellular" evidence="1">
    <location>
        <begin position="260"/>
        <end position="272"/>
    </location>
</feature>
<feature type="transmembrane region" description="Helical; Name=7" evidence="1">
    <location>
        <begin position="273"/>
        <end position="292"/>
    </location>
</feature>
<feature type="topological domain" description="Cytoplasmic" evidence="1">
    <location>
        <begin position="293"/>
        <end position="320"/>
    </location>
</feature>
<feature type="glycosylation site" description="N-linked (GlcNAc...) asparagine" evidence="1">
    <location>
        <position position="5"/>
    </location>
</feature>
<feature type="disulfide bond" evidence="2">
    <location>
        <begin position="97"/>
        <end position="189"/>
    </location>
</feature>
<feature type="sequence variant" id="VAR_010953" description="In allele 6M1-15*03; dbSNP:rs34892006." evidence="3">
    <original>M</original>
    <variation>V</variation>
    <location>
        <position position="81"/>
    </location>
</feature>
<feature type="sequence variant" id="VAR_010954" description="In allele 6M1-15*02; dbSNP:rs35771565." evidence="3">
    <original>D</original>
    <variation>N</variation>
    <location>
        <position position="296"/>
    </location>
</feature>